<proteinExistence type="inferred from homology"/>
<organism>
    <name type="scientific">Mesorhizobium japonicum (strain LMG 29417 / CECT 9101 / MAFF 303099)</name>
    <name type="common">Mesorhizobium loti (strain MAFF 303099)</name>
    <dbReference type="NCBI Taxonomy" id="266835"/>
    <lineage>
        <taxon>Bacteria</taxon>
        <taxon>Pseudomonadati</taxon>
        <taxon>Pseudomonadota</taxon>
        <taxon>Alphaproteobacteria</taxon>
        <taxon>Hyphomicrobiales</taxon>
        <taxon>Phyllobacteriaceae</taxon>
        <taxon>Mesorhizobium</taxon>
    </lineage>
</organism>
<comment type="function">
    <text evidence="1">Involved in DNA repair and RecF pathway recombination.</text>
</comment>
<comment type="similarity">
    <text evidence="2">Belongs to the RecO family.</text>
</comment>
<reference key="1">
    <citation type="journal article" date="2000" name="DNA Res.">
        <title>Complete genome structure of the nitrogen-fixing symbiotic bacterium Mesorhizobium loti.</title>
        <authorList>
            <person name="Kaneko T."/>
            <person name="Nakamura Y."/>
            <person name="Sato S."/>
            <person name="Asamizu E."/>
            <person name="Kato T."/>
            <person name="Sasamoto S."/>
            <person name="Watanabe A."/>
            <person name="Idesawa K."/>
            <person name="Ishikawa A."/>
            <person name="Kawashima K."/>
            <person name="Kimura T."/>
            <person name="Kishida Y."/>
            <person name="Kiyokawa C."/>
            <person name="Kohara M."/>
            <person name="Matsumoto M."/>
            <person name="Matsuno A."/>
            <person name="Mochizuki Y."/>
            <person name="Nakayama S."/>
            <person name="Nakazaki N."/>
            <person name="Shimpo S."/>
            <person name="Sugimoto M."/>
            <person name="Takeuchi C."/>
            <person name="Yamada M."/>
            <person name="Tabata S."/>
        </authorList>
    </citation>
    <scope>NUCLEOTIDE SEQUENCE [LARGE SCALE GENOMIC DNA]</scope>
    <source>
        <strain>LMG 29417 / CECT 9101 / MAFF 303099</strain>
    </source>
</reference>
<feature type="chain" id="PRO_0000204986" description="DNA repair protein RecO">
    <location>
        <begin position="1"/>
        <end position="253"/>
    </location>
</feature>
<keyword id="KW-0227">DNA damage</keyword>
<keyword id="KW-0233">DNA recombination</keyword>
<keyword id="KW-0234">DNA repair</keyword>
<name>RECO_RHILO</name>
<sequence>MEWRDEGIILGTRKHGETSAILEVMTRAHGRHLGLVRGGRSRKQQPVLQPGNRVDLLWRARLDEHLGTFQAEAIEMNAARLMDSAVAVYGLQTMAAHLRLLPERDAHGGLYEALSVMIVHLDDADAAGELVARFELLILDELGFGLDLSQCAATGTRQDLAYVSPKSGRAVSREAGAPWRDKMLALPAFLQRGSGLRADPAAVEDAFRLTGFFFTRHVYEPRAIEQPDARAGFLAALRKHHATRKAIAGDNAA</sequence>
<gene>
    <name type="primary">recO</name>
    <name type="ordered locus">mlr7769</name>
</gene>
<dbReference type="EMBL" id="BA000012">
    <property type="protein sequence ID" value="BAB54160.1"/>
    <property type="molecule type" value="Genomic_DNA"/>
</dbReference>
<dbReference type="RefSeq" id="WP_010915107.1">
    <property type="nucleotide sequence ID" value="NC_002678.2"/>
</dbReference>
<dbReference type="SMR" id="Q985A3"/>
<dbReference type="GeneID" id="66685012"/>
<dbReference type="KEGG" id="mlo:mlr7769"/>
<dbReference type="eggNOG" id="COG1381">
    <property type="taxonomic scope" value="Bacteria"/>
</dbReference>
<dbReference type="HOGENOM" id="CLU_086029_0_0_5"/>
<dbReference type="Proteomes" id="UP000000552">
    <property type="component" value="Chromosome"/>
</dbReference>
<dbReference type="GO" id="GO:0043590">
    <property type="term" value="C:bacterial nucleoid"/>
    <property type="evidence" value="ECO:0007669"/>
    <property type="project" value="TreeGrafter"/>
</dbReference>
<dbReference type="GO" id="GO:0006310">
    <property type="term" value="P:DNA recombination"/>
    <property type="evidence" value="ECO:0007669"/>
    <property type="project" value="UniProtKB-UniRule"/>
</dbReference>
<dbReference type="GO" id="GO:0006302">
    <property type="term" value="P:double-strand break repair"/>
    <property type="evidence" value="ECO:0007669"/>
    <property type="project" value="TreeGrafter"/>
</dbReference>
<dbReference type="Gene3D" id="2.40.50.140">
    <property type="entry name" value="Nucleic acid-binding proteins"/>
    <property type="match status" value="1"/>
</dbReference>
<dbReference type="Gene3D" id="1.20.1440.120">
    <property type="entry name" value="Recombination protein O, C-terminal domain"/>
    <property type="match status" value="1"/>
</dbReference>
<dbReference type="HAMAP" id="MF_00201">
    <property type="entry name" value="RecO"/>
    <property type="match status" value="1"/>
</dbReference>
<dbReference type="InterPro" id="IPR037278">
    <property type="entry name" value="ARFGAP/RecO"/>
</dbReference>
<dbReference type="InterPro" id="IPR022572">
    <property type="entry name" value="DNA_rep/recomb_RecO_N"/>
</dbReference>
<dbReference type="InterPro" id="IPR012340">
    <property type="entry name" value="NA-bd_OB-fold"/>
</dbReference>
<dbReference type="InterPro" id="IPR003717">
    <property type="entry name" value="RecO"/>
</dbReference>
<dbReference type="InterPro" id="IPR042242">
    <property type="entry name" value="RecO_C"/>
</dbReference>
<dbReference type="NCBIfam" id="TIGR00613">
    <property type="entry name" value="reco"/>
    <property type="match status" value="1"/>
</dbReference>
<dbReference type="PANTHER" id="PTHR33991">
    <property type="entry name" value="DNA REPAIR PROTEIN RECO"/>
    <property type="match status" value="1"/>
</dbReference>
<dbReference type="PANTHER" id="PTHR33991:SF1">
    <property type="entry name" value="DNA REPAIR PROTEIN RECO"/>
    <property type="match status" value="1"/>
</dbReference>
<dbReference type="Pfam" id="PF02565">
    <property type="entry name" value="RecO_C"/>
    <property type="match status" value="1"/>
</dbReference>
<dbReference type="Pfam" id="PF11967">
    <property type="entry name" value="RecO_N"/>
    <property type="match status" value="1"/>
</dbReference>
<dbReference type="SUPFAM" id="SSF57863">
    <property type="entry name" value="ArfGap/RecO-like zinc finger"/>
    <property type="match status" value="1"/>
</dbReference>
<dbReference type="SUPFAM" id="SSF50249">
    <property type="entry name" value="Nucleic acid-binding proteins"/>
    <property type="match status" value="1"/>
</dbReference>
<protein>
    <recommendedName>
        <fullName>DNA repair protein RecO</fullName>
    </recommendedName>
    <alternativeName>
        <fullName>Recombination protein O</fullName>
    </alternativeName>
</protein>
<evidence type="ECO:0000250" key="1"/>
<evidence type="ECO:0000305" key="2"/>
<accession>Q985A3</accession>